<gene>
    <name type="primary">PRP19</name>
    <name type="synonym">PSO4</name>
    <name type="ordered locus">YLL036C</name>
</gene>
<accession>P32523</accession>
<accession>D6VXW9</accession>
<accession>Q07870</accession>
<protein>
    <recommendedName>
        <fullName evidence="7">Pre-mRNA-processing factor 19</fullName>
        <ecNumber evidence="2">2.3.2.27</ecNumber>
    </recommendedName>
    <alternativeName>
        <fullName evidence="7">RING-type E3 ubiquitin transferase PRP19</fullName>
    </alternativeName>
</protein>
<feature type="chain" id="PRO_0000058587" description="Pre-mRNA-processing factor 19">
    <location>
        <begin position="1"/>
        <end position="503"/>
    </location>
</feature>
<feature type="domain" description="U-box">
    <location>
        <begin position="1"/>
        <end position="71"/>
    </location>
</feature>
<feature type="repeat" description="WD 1">
    <location>
        <begin position="328"/>
        <end position="367"/>
    </location>
</feature>
<feature type="repeat" description="WD 2">
    <location>
        <begin position="372"/>
        <end position="410"/>
    </location>
</feature>
<feature type="repeat" description="WD 3">
    <location>
        <begin position="418"/>
        <end position="458"/>
    </location>
</feature>
<feature type="region of interest" description="Required for self-association">
    <location>
        <begin position="57"/>
        <end position="144"/>
    </location>
</feature>
<feature type="region of interest" description="Interaction with CEF1" evidence="5">
    <location>
        <begin position="76"/>
        <end position="134"/>
    </location>
</feature>
<feature type="sequence conflict" description="In Ref. 1; AAA34912." evidence="7" ref="1">
    <location>
        <position position="239"/>
    </location>
</feature>
<feature type="turn" evidence="8">
    <location>
        <begin position="4"/>
        <end position="6"/>
    </location>
</feature>
<feature type="strand" evidence="8">
    <location>
        <begin position="11"/>
        <end position="16"/>
    </location>
</feature>
<feature type="turn" evidence="8">
    <location>
        <begin position="17"/>
        <end position="20"/>
    </location>
</feature>
<feature type="strand" evidence="8">
    <location>
        <begin position="21"/>
        <end position="24"/>
    </location>
</feature>
<feature type="helix" evidence="8">
    <location>
        <begin position="25"/>
        <end position="35"/>
    </location>
</feature>
<feature type="turn" evidence="8">
    <location>
        <begin position="39"/>
        <end position="41"/>
    </location>
</feature>
<feature type="helix" evidence="8">
    <location>
        <begin position="47"/>
        <end position="49"/>
    </location>
</feature>
<feature type="helix" evidence="11">
    <location>
        <begin position="57"/>
        <end position="64"/>
    </location>
</feature>
<feature type="helix" evidence="11">
    <location>
        <begin position="65"/>
        <end position="67"/>
    </location>
</feature>
<feature type="helix" evidence="11">
    <location>
        <begin position="69"/>
        <end position="72"/>
    </location>
</feature>
<feature type="helix" evidence="11">
    <location>
        <begin position="77"/>
        <end position="131"/>
    </location>
</feature>
<feature type="helix" evidence="9">
    <location>
        <begin position="149"/>
        <end position="163"/>
    </location>
</feature>
<feature type="strand" evidence="10">
    <location>
        <begin position="170"/>
        <end position="172"/>
    </location>
</feature>
<feature type="strand" evidence="9">
    <location>
        <begin position="179"/>
        <end position="187"/>
    </location>
</feature>
<feature type="strand" evidence="9">
    <location>
        <begin position="192"/>
        <end position="194"/>
    </location>
</feature>
<feature type="strand" evidence="9">
    <location>
        <begin position="197"/>
        <end position="200"/>
    </location>
</feature>
<feature type="strand" evidence="9">
    <location>
        <begin position="204"/>
        <end position="216"/>
    </location>
</feature>
<feature type="strand" evidence="9">
    <location>
        <begin position="219"/>
        <end position="227"/>
    </location>
</feature>
<feature type="strand" evidence="9">
    <location>
        <begin position="232"/>
        <end position="237"/>
    </location>
</feature>
<feature type="helix" evidence="9">
    <location>
        <begin position="241"/>
        <end position="243"/>
    </location>
</feature>
<feature type="strand" evidence="9">
    <location>
        <begin position="247"/>
        <end position="252"/>
    </location>
</feature>
<feature type="turn" evidence="9">
    <location>
        <begin position="253"/>
        <end position="255"/>
    </location>
</feature>
<feature type="strand" evidence="9">
    <location>
        <begin position="256"/>
        <end position="261"/>
    </location>
</feature>
<feature type="turn" evidence="9">
    <location>
        <begin position="262"/>
        <end position="264"/>
    </location>
</feature>
<feature type="strand" evidence="9">
    <location>
        <begin position="265"/>
        <end position="270"/>
    </location>
</feature>
<feature type="turn" evidence="9">
    <location>
        <begin position="271"/>
        <end position="274"/>
    </location>
</feature>
<feature type="strand" evidence="9">
    <location>
        <begin position="275"/>
        <end position="281"/>
    </location>
</feature>
<feature type="strand" evidence="9">
    <location>
        <begin position="288"/>
        <end position="292"/>
    </location>
</feature>
<feature type="strand" evidence="9">
    <location>
        <begin position="295"/>
        <end position="298"/>
    </location>
</feature>
<feature type="strand" evidence="9">
    <location>
        <begin position="301"/>
        <end position="306"/>
    </location>
</feature>
<feature type="strand" evidence="9">
    <location>
        <begin position="311"/>
        <end position="319"/>
    </location>
</feature>
<feature type="strand" evidence="9">
    <location>
        <begin position="321"/>
        <end position="325"/>
    </location>
</feature>
<feature type="turn" evidence="10">
    <location>
        <begin position="327"/>
        <end position="329"/>
    </location>
</feature>
<feature type="strand" evidence="9">
    <location>
        <begin position="335"/>
        <end position="338"/>
    </location>
</feature>
<feature type="strand" evidence="9">
    <location>
        <begin position="342"/>
        <end position="348"/>
    </location>
</feature>
<feature type="strand" evidence="9">
    <location>
        <begin position="354"/>
        <end position="358"/>
    </location>
</feature>
<feature type="turn" evidence="10">
    <location>
        <begin position="359"/>
        <end position="362"/>
    </location>
</feature>
<feature type="strand" evidence="10">
    <location>
        <begin position="363"/>
        <end position="368"/>
    </location>
</feature>
<feature type="strand" evidence="9">
    <location>
        <begin position="377"/>
        <end position="382"/>
    </location>
</feature>
<feature type="strand" evidence="9">
    <location>
        <begin position="386"/>
        <end position="401"/>
    </location>
</feature>
<feature type="turn" evidence="10">
    <location>
        <begin position="402"/>
        <end position="405"/>
    </location>
</feature>
<feature type="strand" evidence="9">
    <location>
        <begin position="409"/>
        <end position="411"/>
    </location>
</feature>
<feature type="strand" evidence="9">
    <location>
        <begin position="424"/>
        <end position="428"/>
    </location>
</feature>
<feature type="strand" evidence="9">
    <location>
        <begin position="432"/>
        <end position="439"/>
    </location>
</feature>
<feature type="turn" evidence="9">
    <location>
        <begin position="440"/>
        <end position="443"/>
    </location>
</feature>
<feature type="strand" evidence="9">
    <location>
        <begin position="444"/>
        <end position="451"/>
    </location>
</feature>
<feature type="turn" evidence="9">
    <location>
        <begin position="452"/>
        <end position="455"/>
    </location>
</feature>
<feature type="strand" evidence="9">
    <location>
        <begin position="456"/>
        <end position="459"/>
    </location>
</feature>
<feature type="strand" evidence="10">
    <location>
        <begin position="462"/>
        <end position="464"/>
    </location>
</feature>
<feature type="strand" evidence="10">
    <location>
        <begin position="466"/>
        <end position="471"/>
    </location>
</feature>
<feature type="helix" evidence="10">
    <location>
        <begin position="473"/>
        <end position="475"/>
    </location>
</feature>
<feature type="strand" evidence="9">
    <location>
        <begin position="476"/>
        <end position="482"/>
    </location>
</feature>
<feature type="strand" evidence="9">
    <location>
        <begin position="485"/>
        <end position="491"/>
    </location>
</feature>
<feature type="strand" evidence="9">
    <location>
        <begin position="493"/>
        <end position="502"/>
    </location>
</feature>
<evidence type="ECO:0000269" key="1">
    <source>
    </source>
</evidence>
<evidence type="ECO:0000269" key="2">
    <source>
    </source>
</evidence>
<evidence type="ECO:0000269" key="3">
    <source>
    </source>
</evidence>
<evidence type="ECO:0000269" key="4">
    <source>
    </source>
</evidence>
<evidence type="ECO:0000269" key="5">
    <source>
    </source>
</evidence>
<evidence type="ECO:0000269" key="6">
    <source>
    </source>
</evidence>
<evidence type="ECO:0000305" key="7"/>
<evidence type="ECO:0007829" key="8">
    <source>
        <dbReference type="PDB" id="2BAY"/>
    </source>
</evidence>
<evidence type="ECO:0007829" key="9">
    <source>
        <dbReference type="PDB" id="4ZB4"/>
    </source>
</evidence>
<evidence type="ECO:0007829" key="10">
    <source>
        <dbReference type="PDB" id="5GMK"/>
    </source>
</evidence>
<evidence type="ECO:0007829" key="11">
    <source>
        <dbReference type="PDB" id="9DTR"/>
    </source>
</evidence>
<keyword id="KW-0002">3D-structure</keyword>
<keyword id="KW-0227">DNA damage</keyword>
<keyword id="KW-0234">DNA repair</keyword>
<keyword id="KW-0507">mRNA processing</keyword>
<keyword id="KW-0508">mRNA splicing</keyword>
<keyword id="KW-0539">Nucleus</keyword>
<keyword id="KW-1185">Reference proteome</keyword>
<keyword id="KW-0677">Repeat</keyword>
<keyword id="KW-0747">Spliceosome</keyword>
<keyword id="KW-0808">Transferase</keyword>
<keyword id="KW-0833">Ubl conjugation pathway</keyword>
<keyword id="KW-0853">WD repeat</keyword>
<sequence length="503" mass="56570">MLCAISGKVPRRPVLSPKSRTIFEKSLLEQYVKDTGNDPITNEPLSIEEIVEIVPSAQQASLTESTNSATLKANYSIPNLLTSLQNEWDAIMLENFKLRSTLDSLTKKLSTVMYERDAAKLVAAQLLMEKNEDSKDLPKSSQQAVAITREEFLQGLLQSSRDFVARGKLKAPKWPILKNLELLQAQNYSRNIKTFPYKELNKSMYYDKWVCMCRCEDGALHFTQLKDSKTITTITTPNPRTGGEHPAIISRGPCNRLLLLYPGNQITILDSKTNKVLREIEVDSANEIIYMYGHNEVNTEYFIWADNRGTIGFQSYEDDSQYIVHSAKSDVEYSSGVLHKDSLLLALYSPDGILDVYNLSSPDQASSRFPVDEEAKIKEVKFADNGYWMVVECDQTVVCFDLRKDVGTLAYPTYTIPEFKTGTVTYDIDDSGKNMIAYSNESNSLTIYKFDKKTKNWTKDEESALCLQSDTADFTDMDVVCGDGGIAAILKTNDSFNIVALTP</sequence>
<reference key="1">
    <citation type="journal article" date="1993" name="Mol. Cell. Biol.">
        <title>PRP19: a novel spliceosomal component.</title>
        <authorList>
            <person name="Cheng S.C."/>
            <person name="Tarn W.Y."/>
            <person name="Tsao T.Y."/>
            <person name="Abelson J."/>
        </authorList>
    </citation>
    <scope>NUCLEOTIDE SEQUENCE [GENOMIC DNA]</scope>
</reference>
<reference key="2">
    <citation type="journal article" date="1996" name="Nucleic Acids Res.">
        <title>Allelism of PSO4 and PRP19 links pre-mRNA processing with recombination and error-prone DNA repair in Saccharomyces cerevisiae.</title>
        <authorList>
            <person name="Grey M."/>
            <person name="Duesterhoeft A."/>
            <person name="Henriques J.A.P."/>
            <person name="Brendel M."/>
        </authorList>
    </citation>
    <scope>NUCLEOTIDE SEQUENCE [GENOMIC DNA]</scope>
</reference>
<reference key="3">
    <citation type="journal article" date="1997" name="Nature">
        <title>The nucleotide sequence of Saccharomyces cerevisiae chromosome XII.</title>
        <authorList>
            <person name="Johnston M."/>
            <person name="Hillier L.W."/>
            <person name="Riles L."/>
            <person name="Albermann K."/>
            <person name="Andre B."/>
            <person name="Ansorge W."/>
            <person name="Benes V."/>
            <person name="Brueckner M."/>
            <person name="Delius H."/>
            <person name="Dubois E."/>
            <person name="Duesterhoeft A."/>
            <person name="Entian K.-D."/>
            <person name="Floeth M."/>
            <person name="Goffeau A."/>
            <person name="Hebling U."/>
            <person name="Heumann K."/>
            <person name="Heuss-Neitzel D."/>
            <person name="Hilbert H."/>
            <person name="Hilger F."/>
            <person name="Kleine K."/>
            <person name="Koetter P."/>
            <person name="Louis E.J."/>
            <person name="Messenguy F."/>
            <person name="Mewes H.-W."/>
            <person name="Miosga T."/>
            <person name="Moestl D."/>
            <person name="Mueller-Auer S."/>
            <person name="Nentwich U."/>
            <person name="Obermaier B."/>
            <person name="Piravandi E."/>
            <person name="Pohl T.M."/>
            <person name="Portetelle D."/>
            <person name="Purnelle B."/>
            <person name="Rechmann S."/>
            <person name="Rieger M."/>
            <person name="Rinke M."/>
            <person name="Rose M."/>
            <person name="Scharfe M."/>
            <person name="Scherens B."/>
            <person name="Scholler P."/>
            <person name="Schwager C."/>
            <person name="Schwarz S."/>
            <person name="Underwood A.P."/>
            <person name="Urrestarazu L.A."/>
            <person name="Vandenbol M."/>
            <person name="Verhasselt P."/>
            <person name="Vierendeels F."/>
            <person name="Voet M."/>
            <person name="Volckaert G."/>
            <person name="Voss H."/>
            <person name="Wambutt R."/>
            <person name="Wedler E."/>
            <person name="Wedler H."/>
            <person name="Zimmermann F.K."/>
            <person name="Zollner A."/>
            <person name="Hani J."/>
            <person name="Hoheisel J.D."/>
        </authorList>
    </citation>
    <scope>NUCLEOTIDE SEQUENCE [LARGE SCALE GENOMIC DNA]</scope>
    <source>
        <strain>ATCC 204508 / S288c</strain>
    </source>
</reference>
<reference key="4">
    <citation type="journal article" date="2014" name="G3 (Bethesda)">
        <title>The reference genome sequence of Saccharomyces cerevisiae: Then and now.</title>
        <authorList>
            <person name="Engel S.R."/>
            <person name="Dietrich F.S."/>
            <person name="Fisk D.G."/>
            <person name="Binkley G."/>
            <person name="Balakrishnan R."/>
            <person name="Costanzo M.C."/>
            <person name="Dwight S.S."/>
            <person name="Hitz B.C."/>
            <person name="Karra K."/>
            <person name="Nash R.S."/>
            <person name="Weng S."/>
            <person name="Wong E.D."/>
            <person name="Lloyd P."/>
            <person name="Skrzypek M.S."/>
            <person name="Miyasato S.R."/>
            <person name="Simison M."/>
            <person name="Cherry J.M."/>
        </authorList>
    </citation>
    <scope>GENOME REANNOTATION</scope>
    <source>
        <strain>ATCC 204508 / S288c</strain>
    </source>
</reference>
<reference key="5">
    <citation type="journal article" date="1993" name="Mol. Cell. Biol.">
        <title>The yeast PRP19 protein is not tightly associated with small nuclear RNAs, but appears to associate with the spliceosome after binding of U2 to the pre-mRNA and prior to formation of the functional spliceosome.</title>
        <authorList>
            <person name="Tarn W.Y."/>
            <person name="Lee K.R."/>
            <person name="Cheng S.C."/>
        </authorList>
    </citation>
    <scope>CHARACTERIZATION</scope>
</reference>
<reference key="6">
    <citation type="journal article" date="1994" name="EMBO J.">
        <title>Functional association of essential splicing factor(s) with PRP19 in a protein complex.</title>
        <authorList>
            <person name="Tarn W.Y."/>
            <person name="Hsu C.H."/>
            <person name="Huang K.T."/>
            <person name="Chen H.R."/>
            <person name="Kao H.Y."/>
            <person name="Lee K.R."/>
            <person name="Cheng S.C."/>
        </authorList>
    </citation>
    <scope>SELF-ASSOCIATION</scope>
    <scope>IDENTIFICATION IN THE PRP19-ASSOCIATED COMPLEX</scope>
</reference>
<reference key="7">
    <citation type="journal article" date="2002" name="Mol. Cell. Biol.">
        <title>Proteomics analysis reveals stable multiprotein complexes in both fission and budding yeasts containing Myb-related Cdc5p/Cef1p, novel pre-mRNA splicing factors, and snRNAs.</title>
        <authorList>
            <person name="Ohi M.D."/>
            <person name="Link A.J."/>
            <person name="Ren L."/>
            <person name="Jennings J.L."/>
            <person name="McDonald W.H."/>
            <person name="Gould K.L."/>
        </authorList>
    </citation>
    <scope>IDENTIFICATION IN THE CWC COMPLEX</scope>
    <scope>IDENTIFICATION BY MASS SPECTROMETRY</scope>
</reference>
<reference key="8">
    <citation type="journal article" date="2003" name="Mol. Cell">
        <title>Assigning function to yeast proteins by integration of technologies.</title>
        <authorList>
            <person name="Hazbun T.R."/>
            <person name="Malmstroem L."/>
            <person name="Anderson S."/>
            <person name="Graczyk B.J."/>
            <person name="Fox B."/>
            <person name="Riffle M."/>
            <person name="Sundin B.A."/>
            <person name="Aranda J.D."/>
            <person name="McDonald W.H."/>
            <person name="Chiu C.-H."/>
            <person name="Snydsman B.E."/>
            <person name="Bradley P."/>
            <person name="Muller E.G.D."/>
            <person name="Fields S."/>
            <person name="Baker D."/>
            <person name="Yates J.R. III"/>
            <person name="Davis T.N."/>
        </authorList>
    </citation>
    <scope>IDENTIFICATION BY MASS SPECTROMETRY</scope>
    <scope>INTERACTION WITH CWC2</scope>
</reference>
<reference key="9">
    <citation type="journal article" date="2003" name="Nature">
        <title>Global analysis of protein expression in yeast.</title>
        <authorList>
            <person name="Ghaemmaghami S."/>
            <person name="Huh W.-K."/>
            <person name="Bower K."/>
            <person name="Howson R.W."/>
            <person name="Belle A."/>
            <person name="Dephoure N."/>
            <person name="O'Shea E.K."/>
            <person name="Weissman J.S."/>
        </authorList>
    </citation>
    <scope>LEVEL OF PROTEIN EXPRESSION [LARGE SCALE ANALYSIS]</scope>
</reference>
<reference key="10">
    <citation type="journal article" date="2005" name="Mol. Cell. Biol.">
        <title>Structural and functional analysis of essential pre-mRNA splicing factor Prp19p.</title>
        <authorList>
            <person name="Ohi M.D."/>
            <person name="Vander Kooi C.W."/>
            <person name="Rosenberg J.A."/>
            <person name="Ren L."/>
            <person name="Hirsch J.P."/>
            <person name="Chazin W.J."/>
            <person name="Walz T."/>
            <person name="Gould K.L."/>
        </authorList>
    </citation>
    <scope>TETRAMERIZATION</scope>
    <scope>ELECTRON MICROSCOPY OF THE TETRAMER</scope>
    <scope>INTERACTION WITH CEF1</scope>
</reference>
<reference key="11">
    <citation type="journal article" date="2008" name="Mol. Cell. Proteomics">
        <title>A multidimensional chromatography technology for in-depth phosphoproteome analysis.</title>
        <authorList>
            <person name="Albuquerque C.P."/>
            <person name="Smolka M.B."/>
            <person name="Payne S.H."/>
            <person name="Bafna V."/>
            <person name="Eng J."/>
            <person name="Zhou H."/>
        </authorList>
    </citation>
    <scope>IDENTIFICATION BY MASS SPECTROMETRY [LARGE SCALE ANALYSIS]</scope>
</reference>
<reference key="12">
    <citation type="journal article" date="2009" name="Science">
        <title>Global analysis of Cdk1 substrate phosphorylation sites provides insights into evolution.</title>
        <authorList>
            <person name="Holt L.J."/>
            <person name="Tuch B.B."/>
            <person name="Villen J."/>
            <person name="Johnson A.D."/>
            <person name="Gygi S.P."/>
            <person name="Morgan D.O."/>
        </authorList>
    </citation>
    <scope>IDENTIFICATION BY MASS SPECTROMETRY [LARGE SCALE ANALYSIS]</scope>
</reference>
<reference key="13">
    <citation type="journal article" date="2012" name="Proc. Natl. Acad. Sci. U.S.A.">
        <title>N-terminal acetylome analyses and functional insights of the N-terminal acetyltransferase NatB.</title>
        <authorList>
            <person name="Van Damme P."/>
            <person name="Lasa M."/>
            <person name="Polevoda B."/>
            <person name="Gazquez C."/>
            <person name="Elosegui-Artola A."/>
            <person name="Kim D.S."/>
            <person name="De Juan-Pardo E."/>
            <person name="Demeyer K."/>
            <person name="Hole K."/>
            <person name="Larrea E."/>
            <person name="Timmerman E."/>
            <person name="Prieto J."/>
            <person name="Arnesen T."/>
            <person name="Sherman F."/>
            <person name="Gevaert K."/>
            <person name="Aldabe R."/>
        </authorList>
    </citation>
    <scope>IDENTIFICATION BY MASS SPECTROMETRY [LARGE SCALE ANALYSIS]</scope>
</reference>
<reference key="14">
    <citation type="journal article" date="2003" name="Nat. Struct. Biol.">
        <title>Structural insights into the U-box, a domain associated with multi-ubiquitination.</title>
        <authorList>
            <person name="Ohi M.D."/>
            <person name="Vander Kooi C.W."/>
            <person name="Rosenberg J.A."/>
            <person name="Chazin W.J."/>
            <person name="Gould K.L."/>
        </authorList>
    </citation>
    <scope>STRUCTURE BY NMR OF 1-56</scope>
    <scope>FUNCTION</scope>
    <scope>CATALYTIC ACTIVITY</scope>
    <scope>PATHWAY</scope>
</reference>
<proteinExistence type="evidence at protein level"/>
<comment type="function">
    <text evidence="2">Probable ubiquitin-protein ligase involved in pre-mRNA splicing. Acts as a central component of the NTC complex (or PRP19-associated complex) that associates to the spliceosome to mediate conformational rearrangement or to stabilize the structure of the spliceosome after U4 snRNA dissociation, which leads to spliceosome maturation. It is also probably involved in DNA repair.</text>
</comment>
<comment type="catalytic activity">
    <reaction evidence="2">
        <text>S-ubiquitinyl-[E2 ubiquitin-conjugating enzyme]-L-cysteine + [acceptor protein]-L-lysine = [E2 ubiquitin-conjugating enzyme]-L-cysteine + N(6)-ubiquitinyl-[acceptor protein]-L-lysine.</text>
        <dbReference type="EC" id="2.3.2.27"/>
    </reaction>
</comment>
<comment type="pathway">
    <text evidence="2">Protein modification; protein ubiquitination.</text>
</comment>
<comment type="subunit">
    <text evidence="1 4 5 6">Homotetramer. Component of the NTC complex (or PRP19-associated complex), composed of at least CEF1, CLF1, ISY1, NTC20, SNT309, SYF1, SYF2, and PRP19. The NTC complex associates with the spliceosome after the release of the U1 and U4 snRNAs and forms the CWC spliceosome subcomplex (or CEF1-associated complex) reminiscent of a late-stage spliceosome composed also of the U2, U5 and U6 snRNAs and at least BUD13, BUD31, BRR2, CDC40, CUS1, CWC2, CWC15, CWC21, CWC22, CWC23, CWC24, CWC25, CWC27, ECM2, HSH155, IST3, LEA1, MSL1, PRP8, PRP9, PRP11, PRP21, PRP22, PRP45, PRP46, SLU7, SMB1, SMD1, SMD2, SMD3, SMX2, SMX3, SNU114, SPP2, RSE1 and YJU2. Interacts with CLF1, ISY1, NTC20, PRP19, PRP46, SYF1 and SYF2. Interacts with CWC2.</text>
</comment>
<comment type="interaction">
    <interactant intactId="EBI-493">
        <id>P32523</id>
    </interactant>
    <interactant intactId="EBI-13834">
        <id>P40968</id>
        <label>CDC40</label>
    </interactant>
    <organismsDiffer>false</organismsDiffer>
    <experiments>8</experiments>
</comment>
<comment type="interaction">
    <interactant intactId="EBI-493">
        <id>P32523</id>
    </interactant>
    <interactant intactId="EBI-476">
        <id>Q03654</id>
        <label>CEF1</label>
    </interactant>
    <organismsDiffer>false</organismsDiffer>
    <experiments>10</experiments>
</comment>
<comment type="interaction">
    <interactant intactId="EBI-493">
        <id>P32523</id>
    </interactant>
    <interactant intactId="EBI-484">
        <id>Q12309</id>
        <label>CLF1</label>
    </interactant>
    <organismsDiffer>false</organismsDiffer>
    <experiments>10</experiments>
</comment>
<comment type="interaction">
    <interactant intactId="EBI-493">
        <id>P32523</id>
    </interactant>
    <interactant intactId="EBI-553">
        <id>Q12046</id>
        <label>CWC2</label>
    </interactant>
    <organismsDiffer>false</organismsDiffer>
    <experiments>14</experiments>
</comment>
<comment type="interaction">
    <interactant intactId="EBI-493">
        <id>P32523</id>
    </interactant>
    <interactant intactId="EBI-9382">
        <id>P21374</id>
        <label>ISY1</label>
    </interactant>
    <organismsDiffer>false</organismsDiffer>
    <experiments>7</experiments>
</comment>
<comment type="interaction">
    <interactant intactId="EBI-493">
        <id>P32523</id>
    </interactant>
    <interactant intactId="EBI-20921">
        <id>P38302</id>
        <label>NTC20</label>
    </interactant>
    <organismsDiffer>false</organismsDiffer>
    <experiments>6</experiments>
</comment>
<comment type="interaction">
    <interactant intactId="EBI-493">
        <id>P32523</id>
    </interactant>
    <interactant intactId="EBI-493">
        <id>P32523</id>
        <label>PRP19</label>
    </interactant>
    <organismsDiffer>false</organismsDiffer>
    <experiments>2</experiments>
</comment>
<comment type="interaction">
    <interactant intactId="EBI-493">
        <id>P32523</id>
    </interactant>
    <interactant intactId="EBI-818">
        <id>Q06091</id>
        <label>SNT309</label>
    </interactant>
    <organismsDiffer>false</organismsDiffer>
    <experiments>9</experiments>
</comment>
<comment type="interaction">
    <interactant intactId="EBI-493">
        <id>P32523</id>
    </interactant>
    <interactant intactId="EBI-540">
        <id>Q04048</id>
        <label>SYF1</label>
    </interactant>
    <organismsDiffer>false</organismsDiffer>
    <experiments>7</experiments>
</comment>
<comment type="interaction">
    <interactant intactId="EBI-493">
        <id>P32523</id>
    </interactant>
    <interactant intactId="EBI-23308">
        <id>P53277</id>
        <label>SYF2</label>
    </interactant>
    <organismsDiffer>false</organismsDiffer>
    <experiments>5</experiments>
</comment>
<comment type="interaction">
    <interactant intactId="EBI-493">
        <id>P32523</id>
    </interactant>
    <interactant intactId="EBI-35138">
        <id>Q06525</id>
        <label>URN1</label>
    </interactant>
    <organismsDiffer>false</organismsDiffer>
    <experiments>7</experiments>
</comment>
<comment type="interaction">
    <interactant intactId="EBI-493">
        <id>P32523</id>
    </interactant>
    <interactant intactId="EBI-31589">
        <id>Q12208</id>
        <label>USB1</label>
    </interactant>
    <organismsDiffer>false</organismsDiffer>
    <experiments>4</experiments>
</comment>
<comment type="subcellular location">
    <subcellularLocation>
        <location evidence="7">Nucleus</location>
    </subcellularLocation>
</comment>
<comment type="miscellaneous">
    <text evidence="3">Present with 11700 molecules/cell in log phase SD medium.</text>
</comment>
<comment type="miscellaneous">
    <text>The tetramer is an elongated particle consisting of four globular WD40 domains held together by a central stalk.</text>
</comment>
<comment type="similarity">
    <text evidence="7">Belongs to the WD repeat PRP19 family.</text>
</comment>
<organism>
    <name type="scientific">Saccharomyces cerevisiae (strain ATCC 204508 / S288c)</name>
    <name type="common">Baker's yeast</name>
    <dbReference type="NCBI Taxonomy" id="559292"/>
    <lineage>
        <taxon>Eukaryota</taxon>
        <taxon>Fungi</taxon>
        <taxon>Dikarya</taxon>
        <taxon>Ascomycota</taxon>
        <taxon>Saccharomycotina</taxon>
        <taxon>Saccharomycetes</taxon>
        <taxon>Saccharomycetales</taxon>
        <taxon>Saccharomycetaceae</taxon>
        <taxon>Saccharomyces</taxon>
    </lineage>
</organism>
<name>PRP19_YEAST</name>
<dbReference type="EC" id="2.3.2.27" evidence="2"/>
<dbReference type="EMBL" id="L09721">
    <property type="protein sequence ID" value="AAA34912.1"/>
    <property type="molecule type" value="Genomic_DNA"/>
</dbReference>
<dbReference type="EMBL" id="X99770">
    <property type="protein sequence ID" value="CAA68103.1"/>
    <property type="molecule type" value="Genomic_DNA"/>
</dbReference>
<dbReference type="EMBL" id="Z73142">
    <property type="protein sequence ID" value="CAA97487.1"/>
    <property type="molecule type" value="Genomic_DNA"/>
</dbReference>
<dbReference type="EMBL" id="BK006945">
    <property type="protein sequence ID" value="DAA09285.1"/>
    <property type="molecule type" value="Genomic_DNA"/>
</dbReference>
<dbReference type="PIR" id="S64787">
    <property type="entry name" value="S64787"/>
</dbReference>
<dbReference type="RefSeq" id="NP_013064.1">
    <property type="nucleotide sequence ID" value="NM_001181856.1"/>
</dbReference>
<dbReference type="PDB" id="1N87">
    <property type="method" value="NMR"/>
    <property type="chains" value="A=1-56"/>
</dbReference>
<dbReference type="PDB" id="2BAY">
    <property type="method" value="X-ray"/>
    <property type="resolution" value="1.50 A"/>
    <property type="chains" value="A/B/C/D/E/F=1-58"/>
</dbReference>
<dbReference type="PDB" id="3LRV">
    <property type="method" value="X-ray"/>
    <property type="resolution" value="2.60 A"/>
    <property type="chains" value="A=165-503"/>
</dbReference>
<dbReference type="PDB" id="4ZB4">
    <property type="method" value="X-ray"/>
    <property type="resolution" value="2.30 A"/>
    <property type="chains" value="A/B=144-503"/>
</dbReference>
<dbReference type="PDB" id="5GM6">
    <property type="method" value="EM"/>
    <property type="resolution" value="3.50 A"/>
    <property type="chains" value="o/p/q/r=1-503"/>
</dbReference>
<dbReference type="PDB" id="5GMK">
    <property type="method" value="EM"/>
    <property type="resolution" value="3.40 A"/>
    <property type="chains" value="o/p/q/r=1-503"/>
</dbReference>
<dbReference type="PDB" id="5LJ5">
    <property type="method" value="EM"/>
    <property type="resolution" value="3.80 A"/>
    <property type="chains" value="t/u/v/w=1-503"/>
</dbReference>
<dbReference type="PDB" id="5M8C">
    <property type="method" value="X-ray"/>
    <property type="resolution" value="2.30 A"/>
    <property type="chains" value="A/B=144-503"/>
</dbReference>
<dbReference type="PDB" id="5MQ0">
    <property type="method" value="EM"/>
    <property type="resolution" value="4.17 A"/>
    <property type="chains" value="t/u/v/w=1-503"/>
</dbReference>
<dbReference type="PDB" id="5WSG">
    <property type="method" value="EM"/>
    <property type="resolution" value="4.00 A"/>
    <property type="chains" value="o/p/q/r=1-503"/>
</dbReference>
<dbReference type="PDB" id="5Y88">
    <property type="method" value="EM"/>
    <property type="resolution" value="3.70 A"/>
    <property type="chains" value="q/r/s/t=1-503"/>
</dbReference>
<dbReference type="PDB" id="5YLZ">
    <property type="method" value="EM"/>
    <property type="resolution" value="3.60 A"/>
    <property type="chains" value="q/r/s/t=1-503"/>
</dbReference>
<dbReference type="PDB" id="6BK8">
    <property type="method" value="EM"/>
    <property type="resolution" value="3.30 A"/>
    <property type="chains" value="u/v/w/x=1-503"/>
</dbReference>
<dbReference type="PDB" id="6EXN">
    <property type="method" value="EM"/>
    <property type="resolution" value="3.70 A"/>
    <property type="chains" value="t/u/v/w=1-503"/>
</dbReference>
<dbReference type="PDB" id="6J6G">
    <property type="method" value="EM"/>
    <property type="resolution" value="3.20 A"/>
    <property type="chains" value="o/p/q/r=1-503"/>
</dbReference>
<dbReference type="PDB" id="6J6H">
    <property type="method" value="EM"/>
    <property type="resolution" value="3.60 A"/>
    <property type="chains" value="o/p/q/r=1-503"/>
</dbReference>
<dbReference type="PDB" id="6J6N">
    <property type="method" value="EM"/>
    <property type="resolution" value="3.86 A"/>
    <property type="chains" value="o/p/q/r=1-503"/>
</dbReference>
<dbReference type="PDB" id="6J6Q">
    <property type="method" value="EM"/>
    <property type="resolution" value="3.70 A"/>
    <property type="chains" value="o/p/q/r=1-503"/>
</dbReference>
<dbReference type="PDB" id="9DTR">
    <property type="method" value="EM"/>
    <property type="resolution" value="2.31 A"/>
    <property type="chains" value="t/u/v/w=1-503"/>
</dbReference>
<dbReference type="PDBsum" id="1N87"/>
<dbReference type="PDBsum" id="2BAY"/>
<dbReference type="PDBsum" id="3LRV"/>
<dbReference type="PDBsum" id="4ZB4"/>
<dbReference type="PDBsum" id="5GM6"/>
<dbReference type="PDBsum" id="5GMK"/>
<dbReference type="PDBsum" id="5LJ5"/>
<dbReference type="PDBsum" id="5M8C"/>
<dbReference type="PDBsum" id="5MQ0"/>
<dbReference type="PDBsum" id="5WSG"/>
<dbReference type="PDBsum" id="5Y88"/>
<dbReference type="PDBsum" id="5YLZ"/>
<dbReference type="PDBsum" id="6BK8"/>
<dbReference type="PDBsum" id="6EXN"/>
<dbReference type="PDBsum" id="6J6G"/>
<dbReference type="PDBsum" id="6J6H"/>
<dbReference type="PDBsum" id="6J6N"/>
<dbReference type="PDBsum" id="6J6Q"/>
<dbReference type="PDBsum" id="9DTR"/>
<dbReference type="BMRB" id="P32523"/>
<dbReference type="EMDB" id="EMD-0686"/>
<dbReference type="EMDB" id="EMD-0687"/>
<dbReference type="EMDB" id="EMD-0691"/>
<dbReference type="EMDB" id="EMD-0692"/>
<dbReference type="EMDB" id="EMD-3541"/>
<dbReference type="EMDB" id="EMD-3979"/>
<dbReference type="EMDB" id="EMD-4057"/>
<dbReference type="EMDB" id="EMD-47157"/>
<dbReference type="EMDB" id="EMD-6817"/>
<dbReference type="EMDB" id="EMD-6839"/>
<dbReference type="EMDB" id="EMD-7109"/>
<dbReference type="EMDB" id="EMD-9524"/>
<dbReference type="EMDB" id="EMD-9525"/>
<dbReference type="SMR" id="P32523"/>
<dbReference type="BioGRID" id="31217">
    <property type="interactions" value="538"/>
</dbReference>
<dbReference type="ComplexPortal" id="CPX-1651">
    <property type="entry name" value="PRP19-associated complex"/>
</dbReference>
<dbReference type="ComplexPortal" id="CPX-1885">
    <property type="entry name" value="NineTeen complex"/>
</dbReference>
<dbReference type="DIP" id="DIP-1112N"/>
<dbReference type="FunCoup" id="P32523">
    <property type="interactions" value="534"/>
</dbReference>
<dbReference type="IntAct" id="P32523">
    <property type="interactions" value="70"/>
</dbReference>
<dbReference type="MINT" id="P32523"/>
<dbReference type="STRING" id="4932.YLL036C"/>
<dbReference type="BindingDB" id="P32523"/>
<dbReference type="ChEMBL" id="CHEMBL5058"/>
<dbReference type="iPTMnet" id="P32523"/>
<dbReference type="PaxDb" id="4932-YLL036C"/>
<dbReference type="PeptideAtlas" id="P32523"/>
<dbReference type="EnsemblFungi" id="YLL036C_mRNA">
    <property type="protein sequence ID" value="YLL036C"/>
    <property type="gene ID" value="YLL036C"/>
</dbReference>
<dbReference type="GeneID" id="850623"/>
<dbReference type="KEGG" id="sce:YLL036C"/>
<dbReference type="AGR" id="SGD:S000003959"/>
<dbReference type="SGD" id="S000003959">
    <property type="gene designation" value="PRP19"/>
</dbReference>
<dbReference type="VEuPathDB" id="FungiDB:YLL036C"/>
<dbReference type="eggNOG" id="KOG0289">
    <property type="taxonomic scope" value="Eukaryota"/>
</dbReference>
<dbReference type="GeneTree" id="ENSGT00940000153662"/>
<dbReference type="HOGENOM" id="CLU_023894_0_0_1"/>
<dbReference type="InParanoid" id="P32523"/>
<dbReference type="OMA" id="MIAYSNE"/>
<dbReference type="OrthoDB" id="687049at2759"/>
<dbReference type="BioCyc" id="YEAST:G3O-32139-MONOMER"/>
<dbReference type="BRENDA" id="2.3.2.27">
    <property type="organism ID" value="984"/>
</dbReference>
<dbReference type="Reactome" id="R-SCE-6781823">
    <property type="pathway name" value="Formation of TC-NER Pre-Incision Complex"/>
</dbReference>
<dbReference type="Reactome" id="R-SCE-6782135">
    <property type="pathway name" value="Dual incision in TC-NER"/>
</dbReference>
<dbReference type="Reactome" id="R-SCE-6782210">
    <property type="pathway name" value="Gap-filling DNA repair synthesis and ligation in TC-NER"/>
</dbReference>
<dbReference type="UniPathway" id="UPA00143"/>
<dbReference type="BioGRID-ORCS" id="850623">
    <property type="hits" value="1 hit in 10 CRISPR screens"/>
</dbReference>
<dbReference type="EvolutionaryTrace" id="P32523"/>
<dbReference type="PRO" id="PR:P32523"/>
<dbReference type="Proteomes" id="UP000002311">
    <property type="component" value="Chromosome XII"/>
</dbReference>
<dbReference type="RNAct" id="P32523">
    <property type="molecule type" value="protein"/>
</dbReference>
<dbReference type="GO" id="GO:0005737">
    <property type="term" value="C:cytoplasm"/>
    <property type="evidence" value="ECO:0007005"/>
    <property type="project" value="SGD"/>
</dbReference>
<dbReference type="GO" id="GO:0005829">
    <property type="term" value="C:cytosol"/>
    <property type="evidence" value="ECO:0000314"/>
    <property type="project" value="SGD"/>
</dbReference>
<dbReference type="GO" id="GO:0005739">
    <property type="term" value="C:mitochondrion"/>
    <property type="evidence" value="ECO:0007005"/>
    <property type="project" value="SGD"/>
</dbReference>
<dbReference type="GO" id="GO:0005634">
    <property type="term" value="C:nucleus"/>
    <property type="evidence" value="ECO:0000314"/>
    <property type="project" value="SGD"/>
</dbReference>
<dbReference type="GO" id="GO:0000974">
    <property type="term" value="C:Prp19 complex"/>
    <property type="evidence" value="ECO:0000314"/>
    <property type="project" value="SGD"/>
</dbReference>
<dbReference type="GO" id="GO:0071006">
    <property type="term" value="C:U2-type catalytic step 1 spliceosome"/>
    <property type="evidence" value="ECO:0000314"/>
    <property type="project" value="SGD"/>
</dbReference>
<dbReference type="GO" id="GO:0042802">
    <property type="term" value="F:identical protein binding"/>
    <property type="evidence" value="ECO:0000353"/>
    <property type="project" value="IntAct"/>
</dbReference>
<dbReference type="GO" id="GO:0061630">
    <property type="term" value="F:ubiquitin protein ligase activity"/>
    <property type="evidence" value="ECO:0000250"/>
    <property type="project" value="UniProtKB"/>
</dbReference>
<dbReference type="GO" id="GO:0004842">
    <property type="term" value="F:ubiquitin-protein transferase activity"/>
    <property type="evidence" value="ECO:0000314"/>
    <property type="project" value="SGD"/>
</dbReference>
<dbReference type="GO" id="GO:0006281">
    <property type="term" value="P:DNA repair"/>
    <property type="evidence" value="ECO:0007669"/>
    <property type="project" value="UniProtKB-KW"/>
</dbReference>
<dbReference type="GO" id="GO:0000349">
    <property type="term" value="P:generation of catalytic spliceosome for first transesterification step"/>
    <property type="evidence" value="ECO:0000315"/>
    <property type="project" value="SGD"/>
</dbReference>
<dbReference type="GO" id="GO:0000398">
    <property type="term" value="P:mRNA splicing, via spliceosome"/>
    <property type="evidence" value="ECO:0000318"/>
    <property type="project" value="GO_Central"/>
</dbReference>
<dbReference type="GO" id="GO:0070534">
    <property type="term" value="P:protein K63-linked ubiquitination"/>
    <property type="evidence" value="ECO:0000250"/>
    <property type="project" value="UniProtKB"/>
</dbReference>
<dbReference type="CDD" id="cd16656">
    <property type="entry name" value="RING-Ubox_PRP19"/>
    <property type="match status" value="1"/>
</dbReference>
<dbReference type="FunFam" id="2.130.10.10:FF:002310">
    <property type="entry name" value="Pre-mRNA-processing factor 19"/>
    <property type="match status" value="1"/>
</dbReference>
<dbReference type="FunFam" id="3.30.40.10:FF:000027">
    <property type="entry name" value="Pre-mRNA-processing factor 19, putative"/>
    <property type="match status" value="1"/>
</dbReference>
<dbReference type="Gene3D" id="2.130.10.10">
    <property type="entry name" value="YVTN repeat-like/Quinoprotein amine dehydrogenase"/>
    <property type="match status" value="1"/>
</dbReference>
<dbReference type="Gene3D" id="3.30.40.10">
    <property type="entry name" value="Zinc/RING finger domain, C3HC4 (zinc finger)"/>
    <property type="match status" value="1"/>
</dbReference>
<dbReference type="InterPro" id="IPR013915">
    <property type="entry name" value="Pre-mRNA_splic_Prp19_cc"/>
</dbReference>
<dbReference type="InterPro" id="IPR038959">
    <property type="entry name" value="Prp19"/>
</dbReference>
<dbReference type="InterPro" id="IPR011047">
    <property type="entry name" value="Quinoprotein_ADH-like_sf"/>
</dbReference>
<dbReference type="InterPro" id="IPR055340">
    <property type="entry name" value="RING-Ubox_PRP19"/>
</dbReference>
<dbReference type="InterPro" id="IPR003613">
    <property type="entry name" value="Ubox_domain"/>
</dbReference>
<dbReference type="InterPro" id="IPR015943">
    <property type="entry name" value="WD40/YVTN_repeat-like_dom_sf"/>
</dbReference>
<dbReference type="InterPro" id="IPR013083">
    <property type="entry name" value="Znf_RING/FYVE/PHD"/>
</dbReference>
<dbReference type="PANTHER" id="PTHR43995">
    <property type="entry name" value="PRE-MRNA-PROCESSING FACTOR 19"/>
    <property type="match status" value="1"/>
</dbReference>
<dbReference type="PANTHER" id="PTHR43995:SF1">
    <property type="entry name" value="PRE-MRNA-PROCESSING FACTOR 19"/>
    <property type="match status" value="1"/>
</dbReference>
<dbReference type="Pfam" id="PF08606">
    <property type="entry name" value="Prp19"/>
    <property type="match status" value="1"/>
</dbReference>
<dbReference type="SMART" id="SM00504">
    <property type="entry name" value="Ubox"/>
    <property type="match status" value="1"/>
</dbReference>
<dbReference type="SUPFAM" id="SSF50998">
    <property type="entry name" value="Quinoprotein alcohol dehydrogenase-like"/>
    <property type="match status" value="1"/>
</dbReference>
<dbReference type="SUPFAM" id="SSF57850">
    <property type="entry name" value="RING/U-box"/>
    <property type="match status" value="1"/>
</dbReference>
<dbReference type="PROSITE" id="PS51698">
    <property type="entry name" value="U_BOX"/>
    <property type="match status" value="1"/>
</dbReference>